<gene>
    <name type="primary">ups1</name>
    <name type="synonym">ups</name>
    <name type="ORF">SPAC31G5.08</name>
</gene>
<sequence>MKTALLLKTKSQPFDPYVEAFEKYGRDTAFIPVLRHKRVHEEQLRDKLKNVRKTYCGLIVTSQRVSETLDEALKQEDETERQKILMETPIFTVGPATDDSIRRLGFQQTHGKDCGRGEVLADLIEEWYTTTKQHKPLLFLVGEKHRDIIQRKLGDDRVDSLIVYATQELENTETQIKDTIRKHPTIDWIVAFSPTSICSLLNTFELKIATIGPTTGDYLKKLGTQPNVVSPAPNPESLASSIVAFDEENSS</sequence>
<protein>
    <recommendedName>
        <fullName>Uroporphyrinogen-III synthase</fullName>
        <shortName>UROIIIS</shortName>
        <shortName>UROS</shortName>
        <ecNumber>4.2.1.75</ecNumber>
    </recommendedName>
    <alternativeName>
        <fullName>Hydroxymethylbilane hydrolyase [cyclizing]</fullName>
    </alternativeName>
    <alternativeName>
        <fullName>Uroporphyrinogen-III cosynthase</fullName>
    </alternativeName>
</protein>
<dbReference type="EC" id="4.2.1.75"/>
<dbReference type="EMBL" id="AB004551">
    <property type="protein sequence ID" value="BAA20416.1"/>
    <property type="molecule type" value="Genomic_DNA"/>
</dbReference>
<dbReference type="EMBL" id="CU329670">
    <property type="protein sequence ID" value="CAB11692.1"/>
    <property type="molecule type" value="Genomic_DNA"/>
</dbReference>
<dbReference type="PIR" id="T38625">
    <property type="entry name" value="T38625"/>
</dbReference>
<dbReference type="RefSeq" id="NP_594008.1">
    <property type="nucleotide sequence ID" value="NM_001019434.2"/>
</dbReference>
<dbReference type="SMR" id="P87214"/>
<dbReference type="FunCoup" id="P87214">
    <property type="interactions" value="403"/>
</dbReference>
<dbReference type="STRING" id="284812.P87214"/>
<dbReference type="iPTMnet" id="P87214"/>
<dbReference type="PaxDb" id="4896-SPAC31G5.08.1"/>
<dbReference type="EnsemblFungi" id="SPAC31G5.08.1">
    <property type="protein sequence ID" value="SPAC31G5.08.1:pep"/>
    <property type="gene ID" value="SPAC31G5.08"/>
</dbReference>
<dbReference type="GeneID" id="2543161"/>
<dbReference type="KEGG" id="spo:2543161"/>
<dbReference type="PomBase" id="SPAC31G5.08">
    <property type="gene designation" value="ups1"/>
</dbReference>
<dbReference type="VEuPathDB" id="FungiDB:SPAC31G5.08"/>
<dbReference type="eggNOG" id="KOG4132">
    <property type="taxonomic scope" value="Eukaryota"/>
</dbReference>
<dbReference type="HOGENOM" id="CLU_051874_0_1_1"/>
<dbReference type="InParanoid" id="P87214"/>
<dbReference type="OMA" id="IHGADTG"/>
<dbReference type="PhylomeDB" id="P87214"/>
<dbReference type="Reactome" id="R-SPO-189451">
    <property type="pathway name" value="Heme biosynthesis"/>
</dbReference>
<dbReference type="UniPathway" id="UPA00251">
    <property type="reaction ID" value="UER00320"/>
</dbReference>
<dbReference type="PRO" id="PR:P87214"/>
<dbReference type="Proteomes" id="UP000002485">
    <property type="component" value="Chromosome I"/>
</dbReference>
<dbReference type="GO" id="GO:0005829">
    <property type="term" value="C:cytosol"/>
    <property type="evidence" value="ECO:0007005"/>
    <property type="project" value="PomBase"/>
</dbReference>
<dbReference type="GO" id="GO:0005634">
    <property type="term" value="C:nucleus"/>
    <property type="evidence" value="ECO:0007005"/>
    <property type="project" value="PomBase"/>
</dbReference>
<dbReference type="GO" id="GO:0004852">
    <property type="term" value="F:uroporphyrinogen-III synthase activity"/>
    <property type="evidence" value="ECO:0000318"/>
    <property type="project" value="GO_Central"/>
</dbReference>
<dbReference type="GO" id="GO:0006782">
    <property type="term" value="P:protoporphyrinogen IX biosynthetic process"/>
    <property type="evidence" value="ECO:0007669"/>
    <property type="project" value="UniProtKB-UniPathway"/>
</dbReference>
<dbReference type="GO" id="GO:0006780">
    <property type="term" value="P:uroporphyrinogen III biosynthetic process"/>
    <property type="evidence" value="ECO:0000318"/>
    <property type="project" value="GO_Central"/>
</dbReference>
<dbReference type="CDD" id="cd06578">
    <property type="entry name" value="HemD"/>
    <property type="match status" value="1"/>
</dbReference>
<dbReference type="FunFam" id="3.40.50.10090:FF:000003">
    <property type="entry name" value="uroporphyrinogen-III synthase"/>
    <property type="match status" value="1"/>
</dbReference>
<dbReference type="Gene3D" id="3.40.50.10090">
    <property type="match status" value="2"/>
</dbReference>
<dbReference type="InterPro" id="IPR036108">
    <property type="entry name" value="4pyrrol_syn_uPrphyn_synt_sf"/>
</dbReference>
<dbReference type="InterPro" id="IPR003754">
    <property type="entry name" value="4pyrrol_synth_uPrphyn_synth"/>
</dbReference>
<dbReference type="InterPro" id="IPR039793">
    <property type="entry name" value="UROS/Hem4"/>
</dbReference>
<dbReference type="PANTHER" id="PTHR12390">
    <property type="entry name" value="UROPORPHYRINOGEN III SYNTHASE"/>
    <property type="match status" value="1"/>
</dbReference>
<dbReference type="PANTHER" id="PTHR12390:SF0">
    <property type="entry name" value="UROPORPHYRINOGEN-III SYNTHASE"/>
    <property type="match status" value="1"/>
</dbReference>
<dbReference type="Pfam" id="PF02602">
    <property type="entry name" value="HEM4"/>
    <property type="match status" value="1"/>
</dbReference>
<dbReference type="SUPFAM" id="SSF69618">
    <property type="entry name" value="HemD-like"/>
    <property type="match status" value="1"/>
</dbReference>
<keyword id="KW-0350">Heme biosynthesis</keyword>
<keyword id="KW-0456">Lyase</keyword>
<keyword id="KW-0627">Porphyrin biosynthesis</keyword>
<keyword id="KW-1185">Reference proteome</keyword>
<feature type="chain" id="PRO_0000135253" description="Uroporphyrinogen-III synthase">
    <location>
        <begin position="1"/>
        <end position="251"/>
    </location>
</feature>
<feature type="region of interest" description="Disordered" evidence="2">
    <location>
        <begin position="231"/>
        <end position="251"/>
    </location>
</feature>
<accession>P87214</accession>
<proteinExistence type="inferred from homology"/>
<evidence type="ECO:0000250" key="1"/>
<evidence type="ECO:0000256" key="2">
    <source>
        <dbReference type="SAM" id="MobiDB-lite"/>
    </source>
</evidence>
<evidence type="ECO:0000305" key="3"/>
<organism>
    <name type="scientific">Schizosaccharomyces pombe (strain 972 / ATCC 24843)</name>
    <name type="common">Fission yeast</name>
    <dbReference type="NCBI Taxonomy" id="284812"/>
    <lineage>
        <taxon>Eukaryota</taxon>
        <taxon>Fungi</taxon>
        <taxon>Dikarya</taxon>
        <taxon>Ascomycota</taxon>
        <taxon>Taphrinomycotina</taxon>
        <taxon>Schizosaccharomycetes</taxon>
        <taxon>Schizosaccharomycetales</taxon>
        <taxon>Schizosaccharomycetaceae</taxon>
        <taxon>Schizosaccharomyces</taxon>
    </lineage>
</organism>
<name>HEM4_SCHPO</name>
<comment type="function">
    <text evidence="1">Catalyzes cyclization of the linear tetrapyrrole, hydroxymethylbilane, to the macrocyclic uroporphyrinogen III.</text>
</comment>
<comment type="catalytic activity">
    <reaction>
        <text>hydroxymethylbilane = uroporphyrinogen III + H2O</text>
        <dbReference type="Rhea" id="RHEA:18965"/>
        <dbReference type="ChEBI" id="CHEBI:15377"/>
        <dbReference type="ChEBI" id="CHEBI:57308"/>
        <dbReference type="ChEBI" id="CHEBI:57845"/>
        <dbReference type="EC" id="4.2.1.75"/>
    </reaction>
</comment>
<comment type="pathway">
    <text>Porphyrin-containing compound metabolism; protoporphyrin-IX biosynthesis; coproporphyrinogen-III from 5-aminolevulinate: step 3/4.</text>
</comment>
<comment type="similarity">
    <text evidence="3">Belongs to the uroporphyrinogen-III synthase family.</text>
</comment>
<reference key="1">
    <citation type="submission" date="1997-06" db="EMBL/GenBank/DDBJ databases">
        <title>S.pombe uroporphrinogen III synthase gene.</title>
        <authorList>
            <person name="Kawamukai M."/>
        </authorList>
    </citation>
    <scope>NUCLEOTIDE SEQUENCE [GENOMIC DNA]</scope>
</reference>
<reference key="2">
    <citation type="journal article" date="2002" name="Nature">
        <title>The genome sequence of Schizosaccharomyces pombe.</title>
        <authorList>
            <person name="Wood V."/>
            <person name="Gwilliam R."/>
            <person name="Rajandream M.A."/>
            <person name="Lyne M.H."/>
            <person name="Lyne R."/>
            <person name="Stewart A."/>
            <person name="Sgouros J.G."/>
            <person name="Peat N."/>
            <person name="Hayles J."/>
            <person name="Baker S.G."/>
            <person name="Basham D."/>
            <person name="Bowman S."/>
            <person name="Brooks K."/>
            <person name="Brown D."/>
            <person name="Brown S."/>
            <person name="Chillingworth T."/>
            <person name="Churcher C.M."/>
            <person name="Collins M."/>
            <person name="Connor R."/>
            <person name="Cronin A."/>
            <person name="Davis P."/>
            <person name="Feltwell T."/>
            <person name="Fraser A."/>
            <person name="Gentles S."/>
            <person name="Goble A."/>
            <person name="Hamlin N."/>
            <person name="Harris D.E."/>
            <person name="Hidalgo J."/>
            <person name="Hodgson G."/>
            <person name="Holroyd S."/>
            <person name="Hornsby T."/>
            <person name="Howarth S."/>
            <person name="Huckle E.J."/>
            <person name="Hunt S."/>
            <person name="Jagels K."/>
            <person name="James K.D."/>
            <person name="Jones L."/>
            <person name="Jones M."/>
            <person name="Leather S."/>
            <person name="McDonald S."/>
            <person name="McLean J."/>
            <person name="Mooney P."/>
            <person name="Moule S."/>
            <person name="Mungall K.L."/>
            <person name="Murphy L.D."/>
            <person name="Niblett D."/>
            <person name="Odell C."/>
            <person name="Oliver K."/>
            <person name="O'Neil S."/>
            <person name="Pearson D."/>
            <person name="Quail M.A."/>
            <person name="Rabbinowitsch E."/>
            <person name="Rutherford K.M."/>
            <person name="Rutter S."/>
            <person name="Saunders D."/>
            <person name="Seeger K."/>
            <person name="Sharp S."/>
            <person name="Skelton J."/>
            <person name="Simmonds M.N."/>
            <person name="Squares R."/>
            <person name="Squares S."/>
            <person name="Stevens K."/>
            <person name="Taylor K."/>
            <person name="Taylor R.G."/>
            <person name="Tivey A."/>
            <person name="Walsh S.V."/>
            <person name="Warren T."/>
            <person name="Whitehead S."/>
            <person name="Woodward J.R."/>
            <person name="Volckaert G."/>
            <person name="Aert R."/>
            <person name="Robben J."/>
            <person name="Grymonprez B."/>
            <person name="Weltjens I."/>
            <person name="Vanstreels E."/>
            <person name="Rieger M."/>
            <person name="Schaefer M."/>
            <person name="Mueller-Auer S."/>
            <person name="Gabel C."/>
            <person name="Fuchs M."/>
            <person name="Duesterhoeft A."/>
            <person name="Fritzc C."/>
            <person name="Holzer E."/>
            <person name="Moestl D."/>
            <person name="Hilbert H."/>
            <person name="Borzym K."/>
            <person name="Langer I."/>
            <person name="Beck A."/>
            <person name="Lehrach H."/>
            <person name="Reinhardt R."/>
            <person name="Pohl T.M."/>
            <person name="Eger P."/>
            <person name="Zimmermann W."/>
            <person name="Wedler H."/>
            <person name="Wambutt R."/>
            <person name="Purnelle B."/>
            <person name="Goffeau A."/>
            <person name="Cadieu E."/>
            <person name="Dreano S."/>
            <person name="Gloux S."/>
            <person name="Lelaure V."/>
            <person name="Mottier S."/>
            <person name="Galibert F."/>
            <person name="Aves S.J."/>
            <person name="Xiang Z."/>
            <person name="Hunt C."/>
            <person name="Moore K."/>
            <person name="Hurst S.M."/>
            <person name="Lucas M."/>
            <person name="Rochet M."/>
            <person name="Gaillardin C."/>
            <person name="Tallada V.A."/>
            <person name="Garzon A."/>
            <person name="Thode G."/>
            <person name="Daga R.R."/>
            <person name="Cruzado L."/>
            <person name="Jimenez J."/>
            <person name="Sanchez M."/>
            <person name="del Rey F."/>
            <person name="Benito J."/>
            <person name="Dominguez A."/>
            <person name="Revuelta J.L."/>
            <person name="Moreno S."/>
            <person name="Armstrong J."/>
            <person name="Forsburg S.L."/>
            <person name="Cerutti L."/>
            <person name="Lowe T."/>
            <person name="McCombie W.R."/>
            <person name="Paulsen I."/>
            <person name="Potashkin J."/>
            <person name="Shpakovski G.V."/>
            <person name="Ussery D."/>
            <person name="Barrell B.G."/>
            <person name="Nurse P."/>
        </authorList>
    </citation>
    <scope>NUCLEOTIDE SEQUENCE [LARGE SCALE GENOMIC DNA]</scope>
    <source>
        <strain>972 / ATCC 24843</strain>
    </source>
</reference>